<sequence>MHAIILTMRVGIVGFGNMGQAFALCFSKKLGKENIIVTDKVQEKRNLATEMGIAFASDVKFLADNSDVVLVAVKPKDSQEVLQKLKDYKGIILSIMAGVSIEKMEKILGKDKKIVRVMPNVNVAVGSGVMAITDNGNLSEEERSKVEELLLSCGTLYRIEERLFDAFTALAGSGPAFVFSFIDALALAGVHQGFSYEQALRIALDTVMGSAKLLKEFQVNPNELIAKVTSPGGTTIEGIKYLEEKGFKGTVMECINRTSQKAKKL</sequence>
<evidence type="ECO:0000255" key="1">
    <source>
        <dbReference type="HAMAP-Rule" id="MF_01925"/>
    </source>
</evidence>
<accession>O66553</accession>
<comment type="function">
    <text evidence="1">Catalyzes the reduction of 1-pyrroline-5-carboxylate (PCA) to L-proline.</text>
</comment>
<comment type="catalytic activity">
    <reaction evidence="1">
        <text>L-proline + NADP(+) = (S)-1-pyrroline-5-carboxylate + NADPH + 2 H(+)</text>
        <dbReference type="Rhea" id="RHEA:14109"/>
        <dbReference type="ChEBI" id="CHEBI:15378"/>
        <dbReference type="ChEBI" id="CHEBI:17388"/>
        <dbReference type="ChEBI" id="CHEBI:57783"/>
        <dbReference type="ChEBI" id="CHEBI:58349"/>
        <dbReference type="ChEBI" id="CHEBI:60039"/>
        <dbReference type="EC" id="1.5.1.2"/>
    </reaction>
</comment>
<comment type="catalytic activity">
    <reaction evidence="1">
        <text>L-proline + NAD(+) = (S)-1-pyrroline-5-carboxylate + NADH + 2 H(+)</text>
        <dbReference type="Rhea" id="RHEA:14105"/>
        <dbReference type="ChEBI" id="CHEBI:15378"/>
        <dbReference type="ChEBI" id="CHEBI:17388"/>
        <dbReference type="ChEBI" id="CHEBI:57540"/>
        <dbReference type="ChEBI" id="CHEBI:57945"/>
        <dbReference type="ChEBI" id="CHEBI:60039"/>
        <dbReference type="EC" id="1.5.1.2"/>
    </reaction>
</comment>
<comment type="pathway">
    <text evidence="1">Amino-acid biosynthesis; L-proline biosynthesis; L-proline from L-glutamate 5-semialdehyde: step 1/1.</text>
</comment>
<comment type="subcellular location">
    <subcellularLocation>
        <location evidence="1">Cytoplasm</location>
    </subcellularLocation>
</comment>
<comment type="similarity">
    <text evidence="1">Belongs to the pyrroline-5-carboxylate reductase family.</text>
</comment>
<gene>
    <name evidence="1" type="primary">proC</name>
    <name type="ordered locus">aq_166</name>
</gene>
<name>P5CR_AQUAE</name>
<dbReference type="EC" id="1.5.1.2" evidence="1"/>
<dbReference type="EMBL" id="AE000657">
    <property type="protein sequence ID" value="AAC06504.1"/>
    <property type="molecule type" value="Genomic_DNA"/>
</dbReference>
<dbReference type="PIR" id="F70315">
    <property type="entry name" value="F70315"/>
</dbReference>
<dbReference type="RefSeq" id="NP_213113.1">
    <property type="nucleotide sequence ID" value="NC_000918.1"/>
</dbReference>
<dbReference type="SMR" id="O66553"/>
<dbReference type="FunCoup" id="O66553">
    <property type="interactions" value="383"/>
</dbReference>
<dbReference type="STRING" id="224324.aq_166"/>
<dbReference type="EnsemblBacteria" id="AAC06504">
    <property type="protein sequence ID" value="AAC06504"/>
    <property type="gene ID" value="aq_166"/>
</dbReference>
<dbReference type="KEGG" id="aae:aq_166"/>
<dbReference type="PATRIC" id="fig|224324.8.peg.142"/>
<dbReference type="eggNOG" id="COG0345">
    <property type="taxonomic scope" value="Bacteria"/>
</dbReference>
<dbReference type="HOGENOM" id="CLU_042344_3_1_0"/>
<dbReference type="InParanoid" id="O66553"/>
<dbReference type="OrthoDB" id="9805754at2"/>
<dbReference type="UniPathway" id="UPA00098">
    <property type="reaction ID" value="UER00361"/>
</dbReference>
<dbReference type="Proteomes" id="UP000000798">
    <property type="component" value="Chromosome"/>
</dbReference>
<dbReference type="GO" id="GO:0005737">
    <property type="term" value="C:cytoplasm"/>
    <property type="evidence" value="ECO:0007669"/>
    <property type="project" value="UniProtKB-SubCell"/>
</dbReference>
<dbReference type="GO" id="GO:0004735">
    <property type="term" value="F:pyrroline-5-carboxylate reductase activity"/>
    <property type="evidence" value="ECO:0000318"/>
    <property type="project" value="GO_Central"/>
</dbReference>
<dbReference type="GO" id="GO:0055129">
    <property type="term" value="P:L-proline biosynthetic process"/>
    <property type="evidence" value="ECO:0000318"/>
    <property type="project" value="GO_Central"/>
</dbReference>
<dbReference type="FunFam" id="1.10.3730.10:FF:000001">
    <property type="entry name" value="Pyrroline-5-carboxylate reductase"/>
    <property type="match status" value="1"/>
</dbReference>
<dbReference type="Gene3D" id="3.40.50.720">
    <property type="entry name" value="NAD(P)-binding Rossmann-like Domain"/>
    <property type="match status" value="1"/>
</dbReference>
<dbReference type="Gene3D" id="1.10.3730.10">
    <property type="entry name" value="ProC C-terminal domain-like"/>
    <property type="match status" value="1"/>
</dbReference>
<dbReference type="HAMAP" id="MF_01925">
    <property type="entry name" value="P5C_reductase"/>
    <property type="match status" value="1"/>
</dbReference>
<dbReference type="InterPro" id="IPR008927">
    <property type="entry name" value="6-PGluconate_DH-like_C_sf"/>
</dbReference>
<dbReference type="InterPro" id="IPR036291">
    <property type="entry name" value="NAD(P)-bd_dom_sf"/>
</dbReference>
<dbReference type="InterPro" id="IPR028939">
    <property type="entry name" value="P5C_Rdtase_cat_N"/>
</dbReference>
<dbReference type="InterPro" id="IPR053790">
    <property type="entry name" value="P5CR-like_CS"/>
</dbReference>
<dbReference type="InterPro" id="IPR029036">
    <property type="entry name" value="P5CR_dimer"/>
</dbReference>
<dbReference type="InterPro" id="IPR000304">
    <property type="entry name" value="Pyrroline-COOH_reductase"/>
</dbReference>
<dbReference type="NCBIfam" id="TIGR00112">
    <property type="entry name" value="proC"/>
    <property type="match status" value="1"/>
</dbReference>
<dbReference type="PANTHER" id="PTHR11645">
    <property type="entry name" value="PYRROLINE-5-CARBOXYLATE REDUCTASE"/>
    <property type="match status" value="1"/>
</dbReference>
<dbReference type="PANTHER" id="PTHR11645:SF0">
    <property type="entry name" value="PYRROLINE-5-CARBOXYLATE REDUCTASE 3"/>
    <property type="match status" value="1"/>
</dbReference>
<dbReference type="Pfam" id="PF03807">
    <property type="entry name" value="F420_oxidored"/>
    <property type="match status" value="1"/>
</dbReference>
<dbReference type="Pfam" id="PF14748">
    <property type="entry name" value="P5CR_dimer"/>
    <property type="match status" value="1"/>
</dbReference>
<dbReference type="PIRSF" id="PIRSF000193">
    <property type="entry name" value="Pyrrol-5-carb_rd"/>
    <property type="match status" value="1"/>
</dbReference>
<dbReference type="SUPFAM" id="SSF48179">
    <property type="entry name" value="6-phosphogluconate dehydrogenase C-terminal domain-like"/>
    <property type="match status" value="1"/>
</dbReference>
<dbReference type="SUPFAM" id="SSF51735">
    <property type="entry name" value="NAD(P)-binding Rossmann-fold domains"/>
    <property type="match status" value="1"/>
</dbReference>
<dbReference type="PROSITE" id="PS00521">
    <property type="entry name" value="P5CR"/>
    <property type="match status" value="1"/>
</dbReference>
<protein>
    <recommendedName>
        <fullName evidence="1">Pyrroline-5-carboxylate reductase</fullName>
        <shortName evidence="1">P5C reductase</shortName>
        <shortName evidence="1">P5CR</shortName>
        <ecNumber evidence="1">1.5.1.2</ecNumber>
    </recommendedName>
    <alternativeName>
        <fullName evidence="1">PCA reductase</fullName>
    </alternativeName>
</protein>
<keyword id="KW-0028">Amino-acid biosynthesis</keyword>
<keyword id="KW-0963">Cytoplasm</keyword>
<keyword id="KW-0521">NADP</keyword>
<keyword id="KW-0560">Oxidoreductase</keyword>
<keyword id="KW-0641">Proline biosynthesis</keyword>
<keyword id="KW-1185">Reference proteome</keyword>
<organism>
    <name type="scientific">Aquifex aeolicus (strain VF5)</name>
    <dbReference type="NCBI Taxonomy" id="224324"/>
    <lineage>
        <taxon>Bacteria</taxon>
        <taxon>Pseudomonadati</taxon>
        <taxon>Aquificota</taxon>
        <taxon>Aquificia</taxon>
        <taxon>Aquificales</taxon>
        <taxon>Aquificaceae</taxon>
        <taxon>Aquifex</taxon>
    </lineage>
</organism>
<feature type="chain" id="PRO_0000187284" description="Pyrroline-5-carboxylate reductase">
    <location>
        <begin position="1"/>
        <end position="265"/>
    </location>
</feature>
<proteinExistence type="inferred from homology"/>
<reference key="1">
    <citation type="journal article" date="1998" name="Nature">
        <title>The complete genome of the hyperthermophilic bacterium Aquifex aeolicus.</title>
        <authorList>
            <person name="Deckert G."/>
            <person name="Warren P.V."/>
            <person name="Gaasterland T."/>
            <person name="Young W.G."/>
            <person name="Lenox A.L."/>
            <person name="Graham D.E."/>
            <person name="Overbeek R."/>
            <person name="Snead M.A."/>
            <person name="Keller M."/>
            <person name="Aujay M."/>
            <person name="Huber R."/>
            <person name="Feldman R.A."/>
            <person name="Short J.M."/>
            <person name="Olsen G.J."/>
            <person name="Swanson R.V."/>
        </authorList>
    </citation>
    <scope>NUCLEOTIDE SEQUENCE [LARGE SCALE GENOMIC DNA]</scope>
    <source>
        <strain>VF5</strain>
    </source>
</reference>